<gene>
    <name evidence="1" type="primary">rimP</name>
    <name type="ordered locus">BH2417</name>
</gene>
<comment type="function">
    <text evidence="1">Required for maturation of 30S ribosomal subunits.</text>
</comment>
<comment type="subcellular location">
    <subcellularLocation>
        <location evidence="1">Cytoplasm</location>
    </subcellularLocation>
</comment>
<comment type="similarity">
    <text evidence="1">Belongs to the RimP family.</text>
</comment>
<proteinExistence type="inferred from homology"/>
<keyword id="KW-0963">Cytoplasm</keyword>
<keyword id="KW-1185">Reference proteome</keyword>
<keyword id="KW-0690">Ribosome biogenesis</keyword>
<feature type="chain" id="PRO_0000181843" description="Ribosome maturation factor RimP">
    <location>
        <begin position="1"/>
        <end position="156"/>
    </location>
</feature>
<sequence length="156" mass="17688">MGKKVVDITAELVKPILEQLDLELYDVEFKKEGKDWFLRVFIDSETGVDLEDCGKVSERLSEKLDETDPIEQAYFLEVSSPGAERPLKREKDLLRSIGKNVHVTLYEPIDGEKALEGELTEFDGETLTIEIKIKTRKKTVTIPYAKVASARLAVVF</sequence>
<evidence type="ECO:0000255" key="1">
    <source>
        <dbReference type="HAMAP-Rule" id="MF_01077"/>
    </source>
</evidence>
<organism>
    <name type="scientific">Halalkalibacterium halodurans (strain ATCC BAA-125 / DSM 18197 / FERM 7344 / JCM 9153 / C-125)</name>
    <name type="common">Bacillus halodurans</name>
    <dbReference type="NCBI Taxonomy" id="272558"/>
    <lineage>
        <taxon>Bacteria</taxon>
        <taxon>Bacillati</taxon>
        <taxon>Bacillota</taxon>
        <taxon>Bacilli</taxon>
        <taxon>Bacillales</taxon>
        <taxon>Bacillaceae</taxon>
        <taxon>Halalkalibacterium (ex Joshi et al. 2022)</taxon>
    </lineage>
</organism>
<dbReference type="EMBL" id="BA000004">
    <property type="protein sequence ID" value="BAB06136.1"/>
    <property type="molecule type" value="Genomic_DNA"/>
</dbReference>
<dbReference type="PIR" id="A83952">
    <property type="entry name" value="A83952"/>
</dbReference>
<dbReference type="RefSeq" id="WP_010898570.1">
    <property type="nucleotide sequence ID" value="NC_002570.2"/>
</dbReference>
<dbReference type="SMR" id="Q9KA73"/>
<dbReference type="STRING" id="272558.gene:10728315"/>
<dbReference type="GeneID" id="87597937"/>
<dbReference type="KEGG" id="bha:BH2417"/>
<dbReference type="eggNOG" id="COG0779">
    <property type="taxonomic scope" value="Bacteria"/>
</dbReference>
<dbReference type="HOGENOM" id="CLU_070525_2_0_9"/>
<dbReference type="OrthoDB" id="9805006at2"/>
<dbReference type="Proteomes" id="UP000001258">
    <property type="component" value="Chromosome"/>
</dbReference>
<dbReference type="GO" id="GO:0005829">
    <property type="term" value="C:cytosol"/>
    <property type="evidence" value="ECO:0007669"/>
    <property type="project" value="TreeGrafter"/>
</dbReference>
<dbReference type="GO" id="GO:0000028">
    <property type="term" value="P:ribosomal small subunit assembly"/>
    <property type="evidence" value="ECO:0007669"/>
    <property type="project" value="TreeGrafter"/>
</dbReference>
<dbReference type="GO" id="GO:0006412">
    <property type="term" value="P:translation"/>
    <property type="evidence" value="ECO:0007669"/>
    <property type="project" value="TreeGrafter"/>
</dbReference>
<dbReference type="CDD" id="cd01734">
    <property type="entry name" value="YlxS_C"/>
    <property type="match status" value="1"/>
</dbReference>
<dbReference type="FunFam" id="3.30.300.70:FF:000001">
    <property type="entry name" value="Ribosome maturation factor RimP"/>
    <property type="match status" value="1"/>
</dbReference>
<dbReference type="Gene3D" id="2.30.30.180">
    <property type="entry name" value="Ribosome maturation factor RimP, C-terminal domain"/>
    <property type="match status" value="1"/>
</dbReference>
<dbReference type="Gene3D" id="3.30.300.70">
    <property type="entry name" value="RimP-like superfamily, N-terminal"/>
    <property type="match status" value="1"/>
</dbReference>
<dbReference type="HAMAP" id="MF_01077">
    <property type="entry name" value="RimP"/>
    <property type="match status" value="1"/>
</dbReference>
<dbReference type="InterPro" id="IPR003728">
    <property type="entry name" value="Ribosome_maturation_RimP"/>
</dbReference>
<dbReference type="InterPro" id="IPR028998">
    <property type="entry name" value="RimP_C"/>
</dbReference>
<dbReference type="InterPro" id="IPR036847">
    <property type="entry name" value="RimP_C_sf"/>
</dbReference>
<dbReference type="InterPro" id="IPR028989">
    <property type="entry name" value="RimP_N"/>
</dbReference>
<dbReference type="InterPro" id="IPR035956">
    <property type="entry name" value="RimP_N_sf"/>
</dbReference>
<dbReference type="NCBIfam" id="NF000928">
    <property type="entry name" value="PRK00092.1-2"/>
    <property type="match status" value="1"/>
</dbReference>
<dbReference type="PANTHER" id="PTHR33867">
    <property type="entry name" value="RIBOSOME MATURATION FACTOR RIMP"/>
    <property type="match status" value="1"/>
</dbReference>
<dbReference type="PANTHER" id="PTHR33867:SF1">
    <property type="entry name" value="RIBOSOME MATURATION FACTOR RIMP"/>
    <property type="match status" value="1"/>
</dbReference>
<dbReference type="Pfam" id="PF17384">
    <property type="entry name" value="DUF150_C"/>
    <property type="match status" value="1"/>
</dbReference>
<dbReference type="Pfam" id="PF02576">
    <property type="entry name" value="RimP_N"/>
    <property type="match status" value="1"/>
</dbReference>
<dbReference type="SUPFAM" id="SSF74942">
    <property type="entry name" value="YhbC-like, C-terminal domain"/>
    <property type="match status" value="1"/>
</dbReference>
<dbReference type="SUPFAM" id="SSF75420">
    <property type="entry name" value="YhbC-like, N-terminal domain"/>
    <property type="match status" value="1"/>
</dbReference>
<accession>Q9KA73</accession>
<reference key="1">
    <citation type="journal article" date="2000" name="Nucleic Acids Res.">
        <title>Complete genome sequence of the alkaliphilic bacterium Bacillus halodurans and genomic sequence comparison with Bacillus subtilis.</title>
        <authorList>
            <person name="Takami H."/>
            <person name="Nakasone K."/>
            <person name="Takaki Y."/>
            <person name="Maeno G."/>
            <person name="Sasaki R."/>
            <person name="Masui N."/>
            <person name="Fuji F."/>
            <person name="Hirama C."/>
            <person name="Nakamura Y."/>
            <person name="Ogasawara N."/>
            <person name="Kuhara S."/>
            <person name="Horikoshi K."/>
        </authorList>
    </citation>
    <scope>NUCLEOTIDE SEQUENCE [LARGE SCALE GENOMIC DNA]</scope>
    <source>
        <strain>ATCC BAA-125 / DSM 18197 / FERM 7344 / JCM 9153 / C-125</strain>
    </source>
</reference>
<name>RIMP_HALH5</name>
<protein>
    <recommendedName>
        <fullName evidence="1">Ribosome maturation factor RimP</fullName>
    </recommendedName>
</protein>